<feature type="chain" id="PRO_0000247907" description="Plasma membrane proteolipid 3">
    <location>
        <begin position="1"/>
        <end position="55"/>
    </location>
</feature>
<feature type="transmembrane region" description="Helical" evidence="2">
    <location>
        <begin position="6"/>
        <end position="26"/>
    </location>
</feature>
<feature type="transmembrane region" description="Helical" evidence="2">
    <location>
        <begin position="34"/>
        <end position="54"/>
    </location>
</feature>
<evidence type="ECO:0000250" key="1"/>
<evidence type="ECO:0000255" key="2"/>
<evidence type="ECO:0000305" key="3"/>
<name>PMP3_EREGS</name>
<comment type="function">
    <text evidence="1">Plays a role in the regulation of membrane potential. Could mediate a proton leak (By similarity).</text>
</comment>
<comment type="subcellular location">
    <subcellularLocation>
        <location evidence="3">Cell membrane</location>
        <topology evidence="3">Multi-pass membrane protein</topology>
    </subcellularLocation>
</comment>
<comment type="similarity">
    <text evidence="3">Belongs to the UPF0057 (PMP3) family.</text>
</comment>
<keyword id="KW-1003">Cell membrane</keyword>
<keyword id="KW-0472">Membrane</keyword>
<keyword id="KW-1185">Reference proteome</keyword>
<keyword id="KW-0812">Transmembrane</keyword>
<keyword id="KW-1133">Transmembrane helix</keyword>
<protein>
    <recommendedName>
        <fullName>Plasma membrane proteolipid 3</fullName>
    </recommendedName>
</protein>
<reference key="1">
    <citation type="journal article" date="2004" name="Science">
        <title>The Ashbya gossypii genome as a tool for mapping the ancient Saccharomyces cerevisiae genome.</title>
        <authorList>
            <person name="Dietrich F.S."/>
            <person name="Voegeli S."/>
            <person name="Brachat S."/>
            <person name="Lerch A."/>
            <person name="Gates K."/>
            <person name="Steiner S."/>
            <person name="Mohr C."/>
            <person name="Poehlmann R."/>
            <person name="Luedi P."/>
            <person name="Choi S."/>
            <person name="Wing R.A."/>
            <person name="Flavier A."/>
            <person name="Gaffney T.D."/>
            <person name="Philippsen P."/>
        </authorList>
    </citation>
    <scope>NUCLEOTIDE SEQUENCE [LARGE SCALE GENOMIC DNA]</scope>
    <source>
        <strain>ATCC 10895 / CBS 109.51 / FGSC 9923 / NRRL Y-1056</strain>
    </source>
</reference>
<reference key="2">
    <citation type="journal article" date="2013" name="G3 (Bethesda)">
        <title>Genomes of Ashbya fungi isolated from insects reveal four mating-type loci, numerous translocations, lack of transposons, and distinct gene duplications.</title>
        <authorList>
            <person name="Dietrich F.S."/>
            <person name="Voegeli S."/>
            <person name="Kuo S."/>
            <person name="Philippsen P."/>
        </authorList>
    </citation>
    <scope>GENOME REANNOTATION</scope>
    <source>
        <strain>ATCC 10895 / CBS 109.51 / FGSC 9923 / NRRL Y-1056</strain>
    </source>
</reference>
<proteinExistence type="inferred from homology"/>
<sequence length="55" mass="6138">MNSTKVVNVIIAIFLPPVAVFLARGWGVECIVDLLLTIFFFFPGMLYALYIVLTS</sequence>
<accession>Q75C38</accession>
<organism>
    <name type="scientific">Eremothecium gossypii (strain ATCC 10895 / CBS 109.51 / FGSC 9923 / NRRL Y-1056)</name>
    <name type="common">Yeast</name>
    <name type="synonym">Ashbya gossypii</name>
    <dbReference type="NCBI Taxonomy" id="284811"/>
    <lineage>
        <taxon>Eukaryota</taxon>
        <taxon>Fungi</taxon>
        <taxon>Dikarya</taxon>
        <taxon>Ascomycota</taxon>
        <taxon>Saccharomycotina</taxon>
        <taxon>Saccharomycetes</taxon>
        <taxon>Saccharomycetales</taxon>
        <taxon>Saccharomycetaceae</taxon>
        <taxon>Eremothecium</taxon>
    </lineage>
</organism>
<gene>
    <name type="primary">PMP3</name>
    <name type="ordered locus">ACR079W</name>
</gene>
<dbReference type="EMBL" id="AE016816">
    <property type="protein sequence ID" value="AAS51305.1"/>
    <property type="molecule type" value="Genomic_DNA"/>
</dbReference>
<dbReference type="RefSeq" id="NP_983481.1">
    <property type="nucleotide sequence ID" value="NM_208834.1"/>
</dbReference>
<dbReference type="FunCoup" id="Q75C38">
    <property type="interactions" value="1277"/>
</dbReference>
<dbReference type="EnsemblFungi" id="AAS51305">
    <property type="protein sequence ID" value="AAS51305"/>
    <property type="gene ID" value="AGOS_ACR079W"/>
</dbReference>
<dbReference type="GeneID" id="4619606"/>
<dbReference type="KEGG" id="ago:AGOS_ACR079W"/>
<dbReference type="eggNOG" id="KOG1773">
    <property type="taxonomic scope" value="Eukaryota"/>
</dbReference>
<dbReference type="HOGENOM" id="CLU_107649_6_2_1"/>
<dbReference type="InParanoid" id="Q75C38"/>
<dbReference type="OMA" id="GWGRECI"/>
<dbReference type="OrthoDB" id="2802411at2759"/>
<dbReference type="Proteomes" id="UP000000591">
    <property type="component" value="Chromosome III"/>
</dbReference>
<dbReference type="GO" id="GO:0005886">
    <property type="term" value="C:plasma membrane"/>
    <property type="evidence" value="ECO:0007669"/>
    <property type="project" value="UniProtKB-SubCell"/>
</dbReference>
<dbReference type="GO" id="GO:0070300">
    <property type="term" value="F:phosphatidic acid binding"/>
    <property type="evidence" value="ECO:0007669"/>
    <property type="project" value="EnsemblFungi"/>
</dbReference>
<dbReference type="GO" id="GO:0080025">
    <property type="term" value="F:phosphatidylinositol-3,5-bisphosphate binding"/>
    <property type="evidence" value="ECO:0007669"/>
    <property type="project" value="EnsemblFungi"/>
</dbReference>
<dbReference type="GO" id="GO:0032266">
    <property type="term" value="F:phosphatidylinositol-3-phosphate binding"/>
    <property type="evidence" value="ECO:0007669"/>
    <property type="project" value="EnsemblFungi"/>
</dbReference>
<dbReference type="GO" id="GO:0046625">
    <property type="term" value="F:sphingolipid binding"/>
    <property type="evidence" value="ECO:0007669"/>
    <property type="project" value="EnsemblFungi"/>
</dbReference>
<dbReference type="GO" id="GO:0006812">
    <property type="term" value="P:monoatomic cation transport"/>
    <property type="evidence" value="ECO:0007669"/>
    <property type="project" value="EnsemblFungi"/>
</dbReference>
<dbReference type="GO" id="GO:0042391">
    <property type="term" value="P:regulation of membrane potential"/>
    <property type="evidence" value="ECO:0007669"/>
    <property type="project" value="EnsemblFungi"/>
</dbReference>
<dbReference type="InterPro" id="IPR000612">
    <property type="entry name" value="PMP3"/>
</dbReference>
<dbReference type="PANTHER" id="PTHR21659">
    <property type="entry name" value="HYDROPHOBIC PROTEIN RCI2 LOW TEMPERATURE AND SALT RESPONSIVE PROTEIN LTI6 -RELATED"/>
    <property type="match status" value="1"/>
</dbReference>
<dbReference type="PANTHER" id="PTHR21659:SF42">
    <property type="entry name" value="UPF0057 MEMBRANE PROTEIN ZK632.10-RELATED"/>
    <property type="match status" value="1"/>
</dbReference>
<dbReference type="Pfam" id="PF01679">
    <property type="entry name" value="Pmp3"/>
    <property type="match status" value="1"/>
</dbReference>
<dbReference type="PROSITE" id="PS01309">
    <property type="entry name" value="UPF0057"/>
    <property type="match status" value="1"/>
</dbReference>